<proteinExistence type="evidence at protein level"/>
<protein>
    <recommendedName>
        <fullName>Unknown protein 3</fullName>
    </recommendedName>
</protein>
<sequence length="12" mass="1093">FTAAAEAEAAAA</sequence>
<reference evidence="2" key="1">
    <citation type="submission" date="2010-06" db="UniProtKB">
        <authorList>
            <person name="Radha A."/>
            <person name="Pradeep K.G."/>
            <person name="Sreesha S."/>
            <person name="Akbarsha M.A."/>
            <person name="Oommen O.V."/>
        </authorList>
    </citation>
    <scope>PROTEIN SEQUENCE</scope>
    <scope>SUBCELLULAR LOCATION</scope>
    <source>
        <tissue>Muellerian gland</tissue>
    </source>
</reference>
<name>UP3_ICHTR</name>
<accession>P86692</accession>
<dbReference type="GO" id="GO:0005576">
    <property type="term" value="C:extracellular region"/>
    <property type="evidence" value="ECO:0007669"/>
    <property type="project" value="UniProtKB-SubCell"/>
</dbReference>
<comment type="subcellular location">
    <subcellularLocation>
        <location evidence="1">Secreted</location>
    </subcellularLocation>
</comment>
<keyword id="KW-0903">Direct protein sequencing</keyword>
<keyword id="KW-0964">Secreted</keyword>
<feature type="chain" id="PRO_0000397240" description="Unknown protein 3">
    <location>
        <begin position="1"/>
        <end position="12" status="greater than"/>
    </location>
</feature>
<feature type="non-terminal residue">
    <location>
        <position position="12"/>
    </location>
</feature>
<evidence type="ECO:0000269" key="1">
    <source ref="1"/>
</evidence>
<evidence type="ECO:0000305" key="2"/>
<organism>
    <name type="scientific">Ichthyophis tricolor</name>
    <name type="common">Three-colored caecilian</name>
    <name type="synonym">Ichthyophis glutinosus tricolor</name>
    <dbReference type="NCBI Taxonomy" id="194527"/>
    <lineage>
        <taxon>Eukaryota</taxon>
        <taxon>Metazoa</taxon>
        <taxon>Chordata</taxon>
        <taxon>Craniata</taxon>
        <taxon>Vertebrata</taxon>
        <taxon>Euteleostomi</taxon>
        <taxon>Amphibia</taxon>
        <taxon>Gymnophiona</taxon>
        <taxon>Ichthyophiidae</taxon>
        <taxon>Ichthyophis</taxon>
    </lineage>
</organism>